<proteinExistence type="evidence at protein level"/>
<name>SF3B1_MOUSE</name>
<sequence>MAKIAKTHEDIEAQIREIQGKKAALDEAQGVGLDSTGYYDQEIYGGSDSRFAGYVTSIAATELEDDDDDYSSSTSLLGQKKPGYHAPVALLNDIPQSTEQYDPFAEHRPPKIADREDEYKKHRRTMIISPERLDPFADGGKTPDPKMNARTYMDVMREQHLTKEEREIRQQLAEKAKAGELKVVNGAAASQPPSKRKRRWDQTADQTPGATPKKLSSWDQAETPGHTPSLRWDETPGRAKGSETPGATPGSKIWDPTPSHTPAGAATPGRGDTPGHATPGHGGATSSARKNRWDETPKTERDTPGHGSGWAETPRTDRGGDSIGETPTPGASKRKSRWDETPASQMGGSTPVLTPGKTPIGTPAMNMATPTPGHIMSMTPEQLQAWRWEREIDERNRPLSDEELDAMFPEGYKVLPPPAGYVPIRTPARKLTATPTPLGGMTGFHMQTEDRTMKSVNDQPSGNLPFLKPDDIQYFDKLLVDVDESTLSPEEQKERKIMKLLLKIKNGTPPMRKAALRQITDKAREFGAGPLFNQILPLLMSPTLEDQERHLLVKVIDRILYKLDDLVRPYVHKILVVIEPLLIDEDYYARVEGREIISNLAKAAGLATMISTMRPDIDNMDEYVRNTTARAFAVVASALGIPSLLPFLKAVCKSKKSWQARHTGIKIVQQIAILMGCAILPHLRSLVEIIEHGLVDEQQKVRTISALAIAALAEAATPYGIESFDSVLKPLWKGIRQHRGKGLAAFLKAIGYLIPLMDAEYANYYTREVMLILIREFQSPDEEMKKIVLKVVKQCCGTDGVEANYIKTEILPPFFKHFWQHRMALDRRNYRQLVDTTVELANKVGAAEIISRIVDDLKDEAEQYRKMVMETIEKIMGNLGAADIDHKLEEQLIDGILYAFQEQTTEDSVMLNGFGTVVNALGKRVKPYLPQICGTVLWRLNNKSAKVRQQAADLISRTAVVMKTCQEEKLMGHLGVVLYEYLGEEYPEVLGSILGALKAIVNVIGMHKMTPPIKDLLPRLTPILKNRHEKVQENCIDLVGRIADRGAEYVSAREWMRICFELLELLKAHKKAIRRATVNTFGYIAKAIGPHDVLATLLNNLKVQERQNRVCTTVAIAIVAETCSPFTVLPALMNEYRVPELNVQNGVLKSLSFLFEYIGEMGKDYIYAVTPLLEDALMDRDLVHRQTASAVVQHMSLGVYGFGCEDSLNHLLNYVWPNVFETSPHVIQAVMGALEGLRVAIGPCRMLQYCLQGLFHPARKVRDVYWKIYNSIYIGSQDALIAHYPRIYNDDKNTYIRYDLDYIL</sequence>
<organism>
    <name type="scientific">Mus musculus</name>
    <name type="common">Mouse</name>
    <dbReference type="NCBI Taxonomy" id="10090"/>
    <lineage>
        <taxon>Eukaryota</taxon>
        <taxon>Metazoa</taxon>
        <taxon>Chordata</taxon>
        <taxon>Craniata</taxon>
        <taxon>Vertebrata</taxon>
        <taxon>Euteleostomi</taxon>
        <taxon>Mammalia</taxon>
        <taxon>Eutheria</taxon>
        <taxon>Euarchontoglires</taxon>
        <taxon>Glires</taxon>
        <taxon>Rodentia</taxon>
        <taxon>Myomorpha</taxon>
        <taxon>Muroidea</taxon>
        <taxon>Muridae</taxon>
        <taxon>Murinae</taxon>
        <taxon>Mus</taxon>
        <taxon>Mus</taxon>
    </lineage>
</organism>
<feature type="chain" id="PRO_0000174324" description="Splicing factor 3B subunit 1">
    <location>
        <begin position="1"/>
        <end position="1304"/>
    </location>
</feature>
<feature type="repeat" description="HEAT 1">
    <location>
        <begin position="529"/>
        <end position="568"/>
    </location>
</feature>
<feature type="repeat" description="HEAT 2">
    <location>
        <begin position="569"/>
        <end position="603"/>
    </location>
</feature>
<feature type="repeat" description="HEAT 3">
    <location>
        <begin position="604"/>
        <end position="641"/>
    </location>
</feature>
<feature type="repeat" description="HEAT 4">
    <location>
        <begin position="643"/>
        <end position="677"/>
    </location>
</feature>
<feature type="repeat" description="HEAT 5">
    <location>
        <begin position="680"/>
        <end position="718"/>
    </location>
</feature>
<feature type="repeat" description="HEAT 6">
    <location>
        <begin position="763"/>
        <end position="801"/>
    </location>
</feature>
<feature type="repeat" description="HEAT 7">
    <location>
        <begin position="843"/>
        <end position="881"/>
    </location>
</feature>
<feature type="repeat" description="HEAT 8">
    <location>
        <begin position="1010"/>
        <end position="1048"/>
    </location>
</feature>
<feature type="repeat" description="HEAT 9">
    <location>
        <begin position="1052"/>
        <end position="1090"/>
    </location>
</feature>
<feature type="repeat" description="HEAT 10">
    <location>
        <begin position="1122"/>
        <end position="1160"/>
    </location>
</feature>
<feature type="repeat" description="HEAT 11">
    <location>
        <begin position="1163"/>
        <end position="1201"/>
    </location>
</feature>
<feature type="region of interest" description="Disordered" evidence="3">
    <location>
        <begin position="100"/>
        <end position="119"/>
    </location>
</feature>
<feature type="region of interest" description="Disordered" evidence="3">
    <location>
        <begin position="124"/>
        <end position="148"/>
    </location>
</feature>
<feature type="region of interest" description="Disordered" evidence="3">
    <location>
        <begin position="172"/>
        <end position="360"/>
    </location>
</feature>
<feature type="region of interest" description="Interaction with PPP1R8" evidence="1">
    <location>
        <begin position="223"/>
        <end position="491"/>
    </location>
</feature>
<feature type="region of interest" description="Interaction with PHF5A" evidence="2">
    <location>
        <begin position="547"/>
        <end position="550"/>
    </location>
</feature>
<feature type="region of interest" description="Interaction with PHF5A" evidence="2">
    <location>
        <begin position="1156"/>
        <end position="1157"/>
    </location>
</feature>
<feature type="region of interest" description="Interaction with SF3B3 and SF3B5" evidence="2">
    <location>
        <begin position="1248"/>
        <end position="1304"/>
    </location>
</feature>
<feature type="compositionally biased region" description="Basic and acidic residues" evidence="3">
    <location>
        <begin position="104"/>
        <end position="119"/>
    </location>
</feature>
<feature type="compositionally biased region" description="Basic and acidic residues" evidence="3">
    <location>
        <begin position="231"/>
        <end position="241"/>
    </location>
</feature>
<feature type="compositionally biased region" description="Basic and acidic residues" evidence="3">
    <location>
        <begin position="291"/>
        <end position="304"/>
    </location>
</feature>
<feature type="compositionally biased region" description="Polar residues" evidence="3">
    <location>
        <begin position="342"/>
        <end position="352"/>
    </location>
</feature>
<feature type="site" description="Interaction with RNA" evidence="2">
    <location>
        <position position="469"/>
    </location>
</feature>
<feature type="site" description="Interaction with RNA" evidence="2">
    <location>
        <position position="587"/>
    </location>
</feature>
<feature type="site" description="Interaction with PHF5A" evidence="2">
    <location>
        <position position="592"/>
    </location>
</feature>
<feature type="site" description="Interaction with SF3B3" evidence="2">
    <location>
        <position position="602"/>
    </location>
</feature>
<feature type="site" description="Interaction with SF3B3" evidence="2">
    <location>
        <position position="677"/>
    </location>
</feature>
<feature type="site" description="Interaction with RNA" evidence="2">
    <location>
        <position position="1035"/>
    </location>
</feature>
<feature type="site" description="Interaction with RNA" evidence="2">
    <location>
        <position position="1049"/>
    </location>
</feature>
<feature type="site" description="Interaction with RNA" evidence="2">
    <location>
        <position position="1141"/>
    </location>
</feature>
<feature type="site" description="Interaction with SF3B3" evidence="2">
    <location>
        <position position="1205"/>
    </location>
</feature>
<feature type="modified residue" description="Phosphothreonine" evidence="2">
    <location>
        <position position="125"/>
    </location>
</feature>
<feature type="modified residue" description="Phosphoserine" evidence="13">
    <location>
        <position position="129"/>
    </location>
</feature>
<feature type="modified residue" description="N6-acetyllysine" evidence="2">
    <location>
        <position position="141"/>
    </location>
</feature>
<feature type="modified residue" description="Phosphothreonine" evidence="13">
    <location>
        <position position="142"/>
    </location>
</feature>
<feature type="modified residue" description="Citrulline" evidence="6">
    <location>
        <position position="157"/>
    </location>
</feature>
<feature type="modified residue" description="Phosphoserine" evidence="2">
    <location>
        <position position="194"/>
    </location>
</feature>
<feature type="modified residue" description="Phosphothreonine" evidence="2">
    <location>
        <position position="203"/>
    </location>
</feature>
<feature type="modified residue" description="Phosphothreonine" evidence="12 13">
    <location>
        <position position="207"/>
    </location>
</feature>
<feature type="modified residue" description="Phosphothreonine" evidence="12 13">
    <location>
        <position position="211"/>
    </location>
</feature>
<feature type="modified residue" description="N6-acetyllysine; alternate" evidence="14">
    <location>
        <position position="214"/>
    </location>
</feature>
<feature type="modified residue" description="Phosphothreonine" evidence="13">
    <location>
        <position position="223"/>
    </location>
</feature>
<feature type="modified residue" description="Phosphothreonine" evidence="13">
    <location>
        <position position="227"/>
    </location>
</feature>
<feature type="modified residue" description="Phosphoserine" evidence="13">
    <location>
        <position position="229"/>
    </location>
</feature>
<feature type="modified residue" description="Phosphothreonine" evidence="13">
    <location>
        <position position="235"/>
    </location>
</feature>
<feature type="modified residue" description="Phosphothreonine" evidence="13">
    <location>
        <position position="244"/>
    </location>
</feature>
<feature type="modified residue" description="Phosphothreonine" evidence="13">
    <location>
        <position position="248"/>
    </location>
</feature>
<feature type="modified residue" description="Phosphothreonine" evidence="13">
    <location>
        <position position="257"/>
    </location>
</feature>
<feature type="modified residue" description="Phosphothreonine" evidence="13">
    <location>
        <position position="261"/>
    </location>
</feature>
<feature type="modified residue" description="Phosphothreonine" evidence="12 13">
    <location>
        <position position="267"/>
    </location>
</feature>
<feature type="modified residue" description="Phosphothreonine" evidence="13">
    <location>
        <position position="273"/>
    </location>
</feature>
<feature type="modified residue" description="Phosphothreonine" evidence="13">
    <location>
        <position position="278"/>
    </location>
</feature>
<feature type="modified residue" description="Phosphoserine" evidence="13">
    <location>
        <position position="287"/>
    </location>
</feature>
<feature type="modified residue" description="Phosphothreonine" evidence="13">
    <location>
        <position position="296"/>
    </location>
</feature>
<feature type="modified residue" description="Phosphothreonine" evidence="2">
    <location>
        <position position="299"/>
    </location>
</feature>
<feature type="modified residue" description="Phosphothreonine" evidence="13">
    <location>
        <position position="303"/>
    </location>
</feature>
<feature type="modified residue" description="Phosphothreonine" evidence="13">
    <location>
        <position position="313"/>
    </location>
</feature>
<feature type="modified residue" description="Phosphoserine" evidence="2">
    <location>
        <position position="322"/>
    </location>
</feature>
<feature type="modified residue" description="Phosphothreonine" evidence="12 13">
    <location>
        <position position="326"/>
    </location>
</feature>
<feature type="modified residue" description="Phosphothreonine" evidence="13">
    <location>
        <position position="328"/>
    </location>
</feature>
<feature type="modified residue" description="Phosphoserine" evidence="13">
    <location>
        <position position="332"/>
    </location>
</feature>
<feature type="modified residue" description="Phosphothreonine" evidence="13">
    <location>
        <position position="341"/>
    </location>
</feature>
<feature type="modified residue" description="Phosphoserine" evidence="13">
    <location>
        <position position="344"/>
    </location>
</feature>
<feature type="modified residue" description="Phosphoserine" evidence="2">
    <location>
        <position position="349"/>
    </location>
</feature>
<feature type="modified residue" description="Phosphothreonine" evidence="13">
    <location>
        <position position="350"/>
    </location>
</feature>
<feature type="modified residue" description="Phosphothreonine" evidence="2">
    <location>
        <position position="354"/>
    </location>
</feature>
<feature type="modified residue" description="Phosphoserine" evidence="13">
    <location>
        <position position="400"/>
    </location>
</feature>
<feature type="modified residue" description="Phosphothreonine" evidence="2">
    <location>
        <position position="426"/>
    </location>
</feature>
<feature type="modified residue" description="Phosphothreonine; by DYRK1A" evidence="5 13">
    <location>
        <position position="434"/>
    </location>
</feature>
<feature type="modified residue" description="Phosphothreonine" evidence="13">
    <location>
        <position position="436"/>
    </location>
</feature>
<feature type="modified residue" description="Phosphoserine" evidence="13">
    <location>
        <position position="488"/>
    </location>
</feature>
<feature type="modified residue" description="N6-acetyllysine" evidence="2">
    <location>
        <position position="554"/>
    </location>
</feature>
<feature type="modified residue" description="N6-acetyllysine" evidence="2">
    <location>
        <position position="562"/>
    </location>
</feature>
<feature type="cross-link" description="Glycyl lysine isopeptide (Lys-Gly) (interchain with G-Cter in SUMO2); alternate" evidence="2">
    <location>
        <position position="214"/>
    </location>
</feature>
<feature type="cross-link" description="Glycyl lysine isopeptide (Lys-Gly) (interchain with G-Cter in SUMO1); alternate" evidence="2">
    <location>
        <position position="413"/>
    </location>
</feature>
<feature type="cross-link" description="Glycyl lysine isopeptide (Lys-Gly) (interchain with G-Cter in SUMO2); alternate" evidence="2">
    <location>
        <position position="413"/>
    </location>
</feature>
<feature type="cross-link" description="Glycyl lysine isopeptide (Lys-Gly) (interchain with G-Cter in SUMO2)" evidence="2">
    <location>
        <position position="430"/>
    </location>
</feature>
<accession>Q99NB9</accession>
<accession>Q9CSK5</accession>
<protein>
    <recommendedName>
        <fullName>Splicing factor 3B subunit 1</fullName>
    </recommendedName>
    <alternativeName>
        <fullName>Pre-mRNA-splicing factor SF3b 155 kDa subunit</fullName>
        <shortName>SF3b155</shortName>
    </alternativeName>
    <alternativeName>
        <fullName evidence="9">Spliceosome-associated protein 155</fullName>
        <shortName evidence="9">SAP 155</shortName>
    </alternativeName>
</protein>
<reference key="1">
    <citation type="journal article" date="2001" name="Mamm. Genome">
        <title>Molecular cloning, genetic mapping, and expression of the mouse Sf3b1 (SAP155) gene for the U2 snRNP component of spliceosome.</title>
        <authorList>
            <person name="Isono K."/>
            <person name="Abe K."/>
            <person name="Tomaru Y."/>
            <person name="Okazaki Y."/>
            <person name="Hayashizaki Y."/>
            <person name="Koseki H."/>
        </authorList>
    </citation>
    <scope>NUCLEOTIDE SEQUENCE [MRNA]</scope>
    <scope>TISSUE SPECIFICITY</scope>
    <source>
        <tissue>Ovary</tissue>
    </source>
</reference>
<reference key="2">
    <citation type="journal article" date="2005" name="Science">
        <title>The transcriptional landscape of the mammalian genome.</title>
        <authorList>
            <person name="Carninci P."/>
            <person name="Kasukawa T."/>
            <person name="Katayama S."/>
            <person name="Gough J."/>
            <person name="Frith M.C."/>
            <person name="Maeda N."/>
            <person name="Oyama R."/>
            <person name="Ravasi T."/>
            <person name="Lenhard B."/>
            <person name="Wells C."/>
            <person name="Kodzius R."/>
            <person name="Shimokawa K."/>
            <person name="Bajic V.B."/>
            <person name="Brenner S.E."/>
            <person name="Batalov S."/>
            <person name="Forrest A.R."/>
            <person name="Zavolan M."/>
            <person name="Davis M.J."/>
            <person name="Wilming L.G."/>
            <person name="Aidinis V."/>
            <person name="Allen J.E."/>
            <person name="Ambesi-Impiombato A."/>
            <person name="Apweiler R."/>
            <person name="Aturaliya R.N."/>
            <person name="Bailey T.L."/>
            <person name="Bansal M."/>
            <person name="Baxter L."/>
            <person name="Beisel K.W."/>
            <person name="Bersano T."/>
            <person name="Bono H."/>
            <person name="Chalk A.M."/>
            <person name="Chiu K.P."/>
            <person name="Choudhary V."/>
            <person name="Christoffels A."/>
            <person name="Clutterbuck D.R."/>
            <person name="Crowe M.L."/>
            <person name="Dalla E."/>
            <person name="Dalrymple B.P."/>
            <person name="de Bono B."/>
            <person name="Della Gatta G."/>
            <person name="di Bernardo D."/>
            <person name="Down T."/>
            <person name="Engstrom P."/>
            <person name="Fagiolini M."/>
            <person name="Faulkner G."/>
            <person name="Fletcher C.F."/>
            <person name="Fukushima T."/>
            <person name="Furuno M."/>
            <person name="Futaki S."/>
            <person name="Gariboldi M."/>
            <person name="Georgii-Hemming P."/>
            <person name="Gingeras T.R."/>
            <person name="Gojobori T."/>
            <person name="Green R.E."/>
            <person name="Gustincich S."/>
            <person name="Harbers M."/>
            <person name="Hayashi Y."/>
            <person name="Hensch T.K."/>
            <person name="Hirokawa N."/>
            <person name="Hill D."/>
            <person name="Huminiecki L."/>
            <person name="Iacono M."/>
            <person name="Ikeo K."/>
            <person name="Iwama A."/>
            <person name="Ishikawa T."/>
            <person name="Jakt M."/>
            <person name="Kanapin A."/>
            <person name="Katoh M."/>
            <person name="Kawasawa Y."/>
            <person name="Kelso J."/>
            <person name="Kitamura H."/>
            <person name="Kitano H."/>
            <person name="Kollias G."/>
            <person name="Krishnan S.P."/>
            <person name="Kruger A."/>
            <person name="Kummerfeld S.K."/>
            <person name="Kurochkin I.V."/>
            <person name="Lareau L.F."/>
            <person name="Lazarevic D."/>
            <person name="Lipovich L."/>
            <person name="Liu J."/>
            <person name="Liuni S."/>
            <person name="McWilliam S."/>
            <person name="Madan Babu M."/>
            <person name="Madera M."/>
            <person name="Marchionni L."/>
            <person name="Matsuda H."/>
            <person name="Matsuzawa S."/>
            <person name="Miki H."/>
            <person name="Mignone F."/>
            <person name="Miyake S."/>
            <person name="Morris K."/>
            <person name="Mottagui-Tabar S."/>
            <person name="Mulder N."/>
            <person name="Nakano N."/>
            <person name="Nakauchi H."/>
            <person name="Ng P."/>
            <person name="Nilsson R."/>
            <person name="Nishiguchi S."/>
            <person name="Nishikawa S."/>
            <person name="Nori F."/>
            <person name="Ohara O."/>
            <person name="Okazaki Y."/>
            <person name="Orlando V."/>
            <person name="Pang K.C."/>
            <person name="Pavan W.J."/>
            <person name="Pavesi G."/>
            <person name="Pesole G."/>
            <person name="Petrovsky N."/>
            <person name="Piazza S."/>
            <person name="Reed J."/>
            <person name="Reid J.F."/>
            <person name="Ring B.Z."/>
            <person name="Ringwald M."/>
            <person name="Rost B."/>
            <person name="Ruan Y."/>
            <person name="Salzberg S.L."/>
            <person name="Sandelin A."/>
            <person name="Schneider C."/>
            <person name="Schoenbach C."/>
            <person name="Sekiguchi K."/>
            <person name="Semple C.A."/>
            <person name="Seno S."/>
            <person name="Sessa L."/>
            <person name="Sheng Y."/>
            <person name="Shibata Y."/>
            <person name="Shimada H."/>
            <person name="Shimada K."/>
            <person name="Silva D."/>
            <person name="Sinclair B."/>
            <person name="Sperling S."/>
            <person name="Stupka E."/>
            <person name="Sugiura K."/>
            <person name="Sultana R."/>
            <person name="Takenaka Y."/>
            <person name="Taki K."/>
            <person name="Tammoja K."/>
            <person name="Tan S.L."/>
            <person name="Tang S."/>
            <person name="Taylor M.S."/>
            <person name="Tegner J."/>
            <person name="Teichmann S.A."/>
            <person name="Ueda H.R."/>
            <person name="van Nimwegen E."/>
            <person name="Verardo R."/>
            <person name="Wei C.L."/>
            <person name="Yagi K."/>
            <person name="Yamanishi H."/>
            <person name="Zabarovsky E."/>
            <person name="Zhu S."/>
            <person name="Zimmer A."/>
            <person name="Hide W."/>
            <person name="Bult C."/>
            <person name="Grimmond S.M."/>
            <person name="Teasdale R.D."/>
            <person name="Liu E.T."/>
            <person name="Brusic V."/>
            <person name="Quackenbush J."/>
            <person name="Wahlestedt C."/>
            <person name="Mattick J.S."/>
            <person name="Hume D.A."/>
            <person name="Kai C."/>
            <person name="Sasaki D."/>
            <person name="Tomaru Y."/>
            <person name="Fukuda S."/>
            <person name="Kanamori-Katayama M."/>
            <person name="Suzuki M."/>
            <person name="Aoki J."/>
            <person name="Arakawa T."/>
            <person name="Iida J."/>
            <person name="Imamura K."/>
            <person name="Itoh M."/>
            <person name="Kato T."/>
            <person name="Kawaji H."/>
            <person name="Kawagashira N."/>
            <person name="Kawashima T."/>
            <person name="Kojima M."/>
            <person name="Kondo S."/>
            <person name="Konno H."/>
            <person name="Nakano K."/>
            <person name="Ninomiya N."/>
            <person name="Nishio T."/>
            <person name="Okada M."/>
            <person name="Plessy C."/>
            <person name="Shibata K."/>
            <person name="Shiraki T."/>
            <person name="Suzuki S."/>
            <person name="Tagami M."/>
            <person name="Waki K."/>
            <person name="Watahiki A."/>
            <person name="Okamura-Oho Y."/>
            <person name="Suzuki H."/>
            <person name="Kawai J."/>
            <person name="Hayashizaki Y."/>
        </authorList>
    </citation>
    <scope>NUCLEOTIDE SEQUENCE [LARGE SCALE MRNA] OF 1-490</scope>
    <source>
        <strain>C57BL/6J</strain>
        <tissue>Embryo</tissue>
    </source>
</reference>
<reference key="3">
    <citation type="journal article" date="2007" name="Proc. Natl. Acad. Sci. U.S.A.">
        <title>Large-scale phosphorylation analysis of mouse liver.</title>
        <authorList>
            <person name="Villen J."/>
            <person name="Beausoleil S.A."/>
            <person name="Gerber S.A."/>
            <person name="Gygi S.P."/>
        </authorList>
    </citation>
    <scope>PHOSPHORYLATION [LARGE SCALE ANALYSIS] AT THR-207; THR-211; THR-267 AND THR-326</scope>
    <scope>IDENTIFICATION BY MASS SPECTROMETRY [LARGE SCALE ANALYSIS]</scope>
    <source>
        <tissue>Liver</tissue>
    </source>
</reference>
<reference key="4">
    <citation type="journal article" date="2008" name="Neuroscience">
        <title>The Down syndrome candidate dual-specificity tyrosine phosphorylation-regulated kinase 1A phosphorylates the neurodegeneration-related septin 4.</title>
        <authorList>
            <person name="Sitz J.H."/>
            <person name="Baumgaertel K."/>
            <person name="Haemmerle B."/>
            <person name="Papadopoulos C."/>
            <person name="Hekerman P."/>
            <person name="Tejedor F.J."/>
            <person name="Becker W."/>
            <person name="Lutz B."/>
        </authorList>
    </citation>
    <scope>PHOSPHORYLATION AT THR-434</scope>
</reference>
<reference key="5">
    <citation type="journal article" date="2010" name="Cell">
        <title>A tissue-specific atlas of mouse protein phosphorylation and expression.</title>
        <authorList>
            <person name="Huttlin E.L."/>
            <person name="Jedrychowski M.P."/>
            <person name="Elias J.E."/>
            <person name="Goswami T."/>
            <person name="Rad R."/>
            <person name="Beausoleil S.A."/>
            <person name="Villen J."/>
            <person name="Haas W."/>
            <person name="Sowa M.E."/>
            <person name="Gygi S.P."/>
        </authorList>
    </citation>
    <scope>PHOSPHORYLATION [LARGE SCALE ANALYSIS] AT SER-129; THR-142; THR-207; THR-211; THR-223; THR-227; SER-229; THR-235; THR-244; THR-248; THR-257; THR-261; THR-267; THR-273; THR-278; SER-287; THR-296; THR-303; THR-313; THR-326; THR-328; SER-332; THR-341; SER-344; THR-350; SER-400; THR-434; THR-436 AND SER-488</scope>
    <scope>IDENTIFICATION BY MASS SPECTROMETRY [LARGE SCALE ANALYSIS]</scope>
    <source>
        <tissue>Brain</tissue>
        <tissue>Brown adipose tissue</tissue>
        <tissue>Heart</tissue>
        <tissue>Kidney</tissue>
        <tissue>Liver</tissue>
        <tissue>Lung</tissue>
        <tissue>Pancreas</tissue>
        <tissue>Spleen</tissue>
        <tissue>Testis</tissue>
    </source>
</reference>
<reference key="6">
    <citation type="journal article" date="2013" name="Mol. Cell">
        <title>SIRT5-mediated lysine desuccinylation impacts diverse metabolic pathways.</title>
        <authorList>
            <person name="Park J."/>
            <person name="Chen Y."/>
            <person name="Tishkoff D.X."/>
            <person name="Peng C."/>
            <person name="Tan M."/>
            <person name="Dai L."/>
            <person name="Xie Z."/>
            <person name="Zhang Y."/>
            <person name="Zwaans B.M."/>
            <person name="Skinner M.E."/>
            <person name="Lombard D.B."/>
            <person name="Zhao Y."/>
        </authorList>
    </citation>
    <scope>ACETYLATION [LARGE SCALE ANALYSIS] AT LYS-214</scope>
    <scope>IDENTIFICATION BY MASS SPECTROMETRY [LARGE SCALE ANALYSIS]</scope>
    <source>
        <tissue>Embryonic fibroblast</tissue>
    </source>
</reference>
<reference key="7">
    <citation type="journal article" date="2014" name="Nature">
        <title>Citrullination regulates pluripotency and histone H1 binding to chromatin.</title>
        <authorList>
            <person name="Christophorou M.A."/>
            <person name="Castelo-Branco G."/>
            <person name="Halley-Stott R.P."/>
            <person name="Oliveira C.S."/>
            <person name="Loos R."/>
            <person name="Radzisheuskaya A."/>
            <person name="Mowen K.A."/>
            <person name="Bertone P."/>
            <person name="Silva J.C."/>
            <person name="Zernicka-Goetz M."/>
            <person name="Nielsen M.L."/>
            <person name="Gurdon J.B."/>
            <person name="Kouzarides T."/>
        </authorList>
    </citation>
    <scope>CITRULLINATION AT ARG-157</scope>
</reference>
<reference key="8">
    <citation type="journal article" date="2015" name="Cell">
        <title>A biogenesis step upstream of microprocessor controls miR-17~92 expression.</title>
        <authorList>
            <person name="Du P."/>
            <person name="Wang L."/>
            <person name="Sliz P."/>
            <person name="Gregory R.I."/>
        </authorList>
    </citation>
    <scope>FUNCTION</scope>
</reference>
<reference key="9">
    <citation type="journal article" date="2018" name="Cell Rep.">
        <title>Impaired spermatogenesis, muscle, and erythrocyte function in U12 intron splicing-defective zrsr1 mutant mice.</title>
        <authorList>
            <person name="Horiuchi K."/>
            <person name="Perez-Cerezales S."/>
            <person name="Papasaikas P."/>
            <person name="Ramos-Ibeas P."/>
            <person name="Lopez-Cardona A.P."/>
            <person name="Laguna-Barraza R."/>
            <person name="Fonseca Balvis N."/>
            <person name="Pericuesta E."/>
            <person name="Fernandez-Gonzalez R."/>
            <person name="Planells B."/>
            <person name="Viera A."/>
            <person name="Suja J.A."/>
            <person name="Ross P.J."/>
            <person name="Alen F."/>
            <person name="Orio L."/>
            <person name="Rodriguez de Fonseca F."/>
            <person name="Pintado B."/>
            <person name="Valcarcel J."/>
            <person name="Gutierrez-Adan A."/>
        </authorList>
    </citation>
    <scope>INTERACTION WITH ZRSR1</scope>
</reference>
<evidence type="ECO:0000250" key="1"/>
<evidence type="ECO:0000250" key="2">
    <source>
        <dbReference type="UniProtKB" id="O75533"/>
    </source>
</evidence>
<evidence type="ECO:0000256" key="3">
    <source>
        <dbReference type="SAM" id="MobiDB-lite"/>
    </source>
</evidence>
<evidence type="ECO:0000269" key="4">
    <source>
    </source>
</evidence>
<evidence type="ECO:0000269" key="5">
    <source>
    </source>
</evidence>
<evidence type="ECO:0000269" key="6">
    <source>
    </source>
</evidence>
<evidence type="ECO:0000269" key="7">
    <source>
    </source>
</evidence>
<evidence type="ECO:0000269" key="8">
    <source>
    </source>
</evidence>
<evidence type="ECO:0000303" key="9">
    <source>
    </source>
</evidence>
<evidence type="ECO:0000305" key="10"/>
<evidence type="ECO:0000312" key="11">
    <source>
        <dbReference type="MGI" id="MGI:1932339"/>
    </source>
</evidence>
<evidence type="ECO:0007744" key="12">
    <source>
    </source>
</evidence>
<evidence type="ECO:0007744" key="13">
    <source>
    </source>
</evidence>
<evidence type="ECO:0007744" key="14">
    <source>
    </source>
</evidence>
<gene>
    <name evidence="9 11" type="primary">Sf3b1</name>
    <name evidence="9" type="synonym">Sap155</name>
</gene>
<dbReference type="EMBL" id="AB037890">
    <property type="protein sequence ID" value="BAB40140.1"/>
    <property type="molecule type" value="mRNA"/>
</dbReference>
<dbReference type="EMBL" id="AK012632">
    <property type="protein sequence ID" value="BAB28369.1"/>
    <property type="molecule type" value="mRNA"/>
</dbReference>
<dbReference type="BMRB" id="Q99NB9"/>
<dbReference type="SMR" id="Q99NB9"/>
<dbReference type="ComplexPortal" id="CPX-1133">
    <property type="entry name" value="B-WICH chromatin remodelling complex"/>
</dbReference>
<dbReference type="FunCoup" id="Q99NB9">
    <property type="interactions" value="4391"/>
</dbReference>
<dbReference type="IntAct" id="Q99NB9">
    <property type="interactions" value="2"/>
</dbReference>
<dbReference type="MINT" id="Q99NB9"/>
<dbReference type="STRING" id="10090.ENSMUSP00000027127"/>
<dbReference type="GlyGen" id="Q99NB9">
    <property type="glycosylation" value="7 sites, 2 N-linked glycans (2 sites), 1 O-linked glycan (1 site)"/>
</dbReference>
<dbReference type="iPTMnet" id="Q99NB9"/>
<dbReference type="PhosphoSitePlus" id="Q99NB9"/>
<dbReference type="SwissPalm" id="Q99NB9"/>
<dbReference type="jPOST" id="Q99NB9"/>
<dbReference type="PaxDb" id="10090-ENSMUSP00000027127"/>
<dbReference type="ProteomicsDB" id="261176"/>
<dbReference type="Pumba" id="Q99NB9"/>
<dbReference type="AGR" id="MGI:1932339"/>
<dbReference type="MGI" id="MGI:1932339">
    <property type="gene designation" value="Sf3b1"/>
</dbReference>
<dbReference type="eggNOG" id="KOG0213">
    <property type="taxonomic scope" value="Eukaryota"/>
</dbReference>
<dbReference type="InParanoid" id="Q99NB9"/>
<dbReference type="PhylomeDB" id="Q99NB9"/>
<dbReference type="Reactome" id="R-MMU-5250924">
    <property type="pathway name" value="B-WICH complex positively regulates rRNA expression"/>
</dbReference>
<dbReference type="Reactome" id="R-MMU-72163">
    <property type="pathway name" value="mRNA Splicing - Major Pathway"/>
</dbReference>
<dbReference type="Reactome" id="R-MMU-72165">
    <property type="pathway name" value="mRNA Splicing - Minor Pathway"/>
</dbReference>
<dbReference type="ChiTaRS" id="Sf3b1">
    <property type="organism name" value="mouse"/>
</dbReference>
<dbReference type="PRO" id="PR:Q99NB9"/>
<dbReference type="Proteomes" id="UP000000589">
    <property type="component" value="Unplaced"/>
</dbReference>
<dbReference type="RNAct" id="Q99NB9">
    <property type="molecule type" value="protein"/>
</dbReference>
<dbReference type="GO" id="GO:0110016">
    <property type="term" value="C:B-WICH complex"/>
    <property type="evidence" value="ECO:0000266"/>
    <property type="project" value="ComplexPortal"/>
</dbReference>
<dbReference type="GO" id="GO:0000785">
    <property type="term" value="C:chromatin"/>
    <property type="evidence" value="ECO:0000314"/>
    <property type="project" value="MGI"/>
</dbReference>
<dbReference type="GO" id="GO:0016363">
    <property type="term" value="C:nuclear matrix"/>
    <property type="evidence" value="ECO:0000314"/>
    <property type="project" value="MGI"/>
</dbReference>
<dbReference type="GO" id="GO:0016607">
    <property type="term" value="C:nuclear speck"/>
    <property type="evidence" value="ECO:0007669"/>
    <property type="project" value="UniProtKB-SubCell"/>
</dbReference>
<dbReference type="GO" id="GO:0005730">
    <property type="term" value="C:nucleolus"/>
    <property type="evidence" value="ECO:0000303"/>
    <property type="project" value="ComplexPortal"/>
</dbReference>
<dbReference type="GO" id="GO:0005634">
    <property type="term" value="C:nucleus"/>
    <property type="evidence" value="ECO:0000314"/>
    <property type="project" value="MGI"/>
</dbReference>
<dbReference type="GO" id="GO:0030532">
    <property type="term" value="C:small nuclear ribonucleoprotein complex"/>
    <property type="evidence" value="ECO:0000314"/>
    <property type="project" value="MGI"/>
</dbReference>
<dbReference type="GO" id="GO:0034693">
    <property type="term" value="C:U11/U12 snRNP"/>
    <property type="evidence" value="ECO:0000266"/>
    <property type="project" value="MGI"/>
</dbReference>
<dbReference type="GO" id="GO:0005686">
    <property type="term" value="C:U2 snRNP"/>
    <property type="evidence" value="ECO:0000314"/>
    <property type="project" value="MGI"/>
</dbReference>
<dbReference type="GO" id="GO:0005684">
    <property type="term" value="C:U2-type spliceosomal complex"/>
    <property type="evidence" value="ECO:0000250"/>
    <property type="project" value="UniProtKB"/>
</dbReference>
<dbReference type="GO" id="GO:0003682">
    <property type="term" value="F:chromatin binding"/>
    <property type="evidence" value="ECO:0000314"/>
    <property type="project" value="MGI"/>
</dbReference>
<dbReference type="GO" id="GO:0003729">
    <property type="term" value="F:mRNA binding"/>
    <property type="evidence" value="ECO:0007669"/>
    <property type="project" value="InterPro"/>
</dbReference>
<dbReference type="GO" id="GO:0009952">
    <property type="term" value="P:anterior/posterior pattern specification"/>
    <property type="evidence" value="ECO:0000316"/>
    <property type="project" value="MGI"/>
</dbReference>
<dbReference type="GO" id="GO:0001825">
    <property type="term" value="P:blastocyst formation"/>
    <property type="evidence" value="ECO:0000315"/>
    <property type="project" value="MGI"/>
</dbReference>
<dbReference type="GO" id="GO:0006338">
    <property type="term" value="P:chromatin remodeling"/>
    <property type="evidence" value="ECO:0000303"/>
    <property type="project" value="ComplexPortal"/>
</dbReference>
<dbReference type="GO" id="GO:0000398">
    <property type="term" value="P:mRNA splicing, via spliceosome"/>
    <property type="evidence" value="ECO:0000315"/>
    <property type="project" value="MGI"/>
</dbReference>
<dbReference type="GO" id="GO:0045943">
    <property type="term" value="P:positive regulation of transcription by RNA polymerase I"/>
    <property type="evidence" value="ECO:0000303"/>
    <property type="project" value="ComplexPortal"/>
</dbReference>
<dbReference type="GO" id="GO:0045944">
    <property type="term" value="P:positive regulation of transcription by RNA polymerase II"/>
    <property type="evidence" value="ECO:0000303"/>
    <property type="project" value="ComplexPortal"/>
</dbReference>
<dbReference type="GO" id="GO:0045945">
    <property type="term" value="P:positive regulation of transcription by RNA polymerase III"/>
    <property type="evidence" value="ECO:0000266"/>
    <property type="project" value="ComplexPortal"/>
</dbReference>
<dbReference type="GO" id="GO:0000245">
    <property type="term" value="P:spliceosomal complex assembly"/>
    <property type="evidence" value="ECO:0007669"/>
    <property type="project" value="InterPro"/>
</dbReference>
<dbReference type="FunFam" id="1.25.10.10:FF:000810">
    <property type="entry name" value="Splicing factor 3B subunit 1"/>
    <property type="match status" value="1"/>
</dbReference>
<dbReference type="FunFam" id="1.25.10.10:FF:000303">
    <property type="entry name" value="splicing factor 3B subunit 1"/>
    <property type="match status" value="1"/>
</dbReference>
<dbReference type="FunFam" id="1.25.10.10:FF:000088">
    <property type="entry name" value="Splicing factor 3b, subunit 1"/>
    <property type="match status" value="1"/>
</dbReference>
<dbReference type="Gene3D" id="1.25.10.10">
    <property type="entry name" value="Leucine-rich Repeat Variant"/>
    <property type="match status" value="2"/>
</dbReference>
<dbReference type="InterPro" id="IPR011989">
    <property type="entry name" value="ARM-like"/>
</dbReference>
<dbReference type="InterPro" id="IPR016024">
    <property type="entry name" value="ARM-type_fold"/>
</dbReference>
<dbReference type="InterPro" id="IPR054573">
    <property type="entry name" value="PP2A/SF3B1-like_HEAT"/>
</dbReference>
<dbReference type="InterPro" id="IPR015016">
    <property type="entry name" value="SF3b_su1"/>
</dbReference>
<dbReference type="InterPro" id="IPR038737">
    <property type="entry name" value="SF3b_su1-like"/>
</dbReference>
<dbReference type="PANTHER" id="PTHR12097">
    <property type="entry name" value="SPLICING FACTOR 3B, SUBUNIT 1-RELATED"/>
    <property type="match status" value="1"/>
</dbReference>
<dbReference type="Pfam" id="PF22646">
    <property type="entry name" value="PPP2R1A-like_HEAT"/>
    <property type="match status" value="1"/>
</dbReference>
<dbReference type="Pfam" id="PF08920">
    <property type="entry name" value="SF3b1"/>
    <property type="match status" value="1"/>
</dbReference>
<dbReference type="SUPFAM" id="SSF48371">
    <property type="entry name" value="ARM repeat"/>
    <property type="match status" value="1"/>
</dbReference>
<comment type="function">
    <text evidence="2 7">Component of the 17S U2 SnRNP complex of the spliceosome, a large ribonucleoprotein complex that removes introns from transcribed pre-mRNAs (By similarity). The 17S U2 SnRNP complex (1) directly participates in early spliceosome assembly and (2) mediates recognition of the intron branch site during pre-mRNA splicing by promoting the selection of the pre-mRNA branch-site adenosine, the nucleophile for the first step of splicing (By similarity). Within the 17S U2 SnRNP complex, SF3B1 is part of the SF3B subcomplex, which is required for 'A' complex assembly formed by the stable binding of U2 snRNP to the branchpoint sequence in pre-mRNA (By similarity). Sequence independent binding of SF3A and SF3B subcomplexes upstream of the branch site is essential, it may anchor U2 snRNP to the pre-mRNA (By similarity). May also be involved in the assembly of the 'E' complex (By similarity). Also acts as a component of the minor spliceosome, which is involved in the splicing of U12-type introns in pre-mRNAs (By similarity). Together with other U2 snRNP complex components may also play a role in the selective processing of microRNAs (miRNAs) from the long primary miRNA transcript, pri-miR-17-92 (PubMed:26255770).</text>
</comment>
<comment type="subunit">
    <text evidence="2 8">Component of the 17S U2 SnRNP complex, a ribonucleoprotein complex that contains small nuclear RNA (snRNA) U2 and a number of specific proteins (By similarity). Part of the SF3B subcomplex of the 17S U2 SnRNP complex (By similarity). SF3B associates with the splicing subcomplex SF3A and a 12S RNA unit to form the U2 small nuclear ribonucleoproteins complex (U2 snRNP) (By similarity). Within the SF3B complex, interacts directly (via HEAT domain) with SF3B3, SF3B5, SF3B6 and (via HEAT domain) with PHF5A (By similarity). The SF3B subcomplex interacts with U2AF2 (By similarity). Identified in the spliceosome C complex (By similarity). Component of the minor (U12-type spliceosome) spliceosome (By similarity). Within the minor spliceosome complex, interacts with SCNM1 and CRIPT (By similarity). Component of the B-WICH complex, at least composed of SMARCA5/SNF2H, BAZ1B/WSTF, SF3B1, DEK, MYO1C, ERCC6, MYBBP1A and DDX21 (By similarity). Phosphorylated form interacts with PPP1R8 (By similarity). Interacts with PQBP1 (By similarity). Interacts with RBM17 (By similarity). Interacts with RBM39 (By similarity). Interacts with SETX (By similarity). Interacts with RBM15 (By similarity). Interacts with USH1G (By similarity). Interacts with SDE2 (By similarity). Interacts with U2AF1 (By similarity). Interacts with CACTIN (By similarity). Interacts with ZRSR1 (PubMed:29617656). Interacts with CYREN (By similarity).</text>
</comment>
<comment type="subcellular location">
    <subcellularLocation>
        <location evidence="2">Nucleus</location>
    </subcellularLocation>
    <subcellularLocation>
        <location evidence="2">Nucleus speckle</location>
    </subcellularLocation>
    <text evidence="2">During mitosis, transiently dispersed from the nuclear speckles to the cytoplasm.</text>
</comment>
<comment type="tissue specificity">
    <text evidence="4">Ubiquitous.</text>
</comment>
<comment type="PTM">
    <text evidence="2">Phosphorylated (By similarity). Phosphorylation occurs concomitantly with the splicing catalytic steps (By similarity). Phosphorylation on Thr-244, Thr-248 and Thr-313 by cyclin-dependent kinases promotes interaction with PPP1R8 during mitosis (By similarity).</text>
</comment>
<comment type="PTM">
    <text evidence="6">Citrullinated by PADI4.</text>
</comment>
<comment type="similarity">
    <text evidence="10">Belongs to the SF3B1 family.</text>
</comment>
<keyword id="KW-0007">Acetylation</keyword>
<keyword id="KW-0164">Citrullination</keyword>
<keyword id="KW-1017">Isopeptide bond</keyword>
<keyword id="KW-0507">mRNA processing</keyword>
<keyword id="KW-0508">mRNA splicing</keyword>
<keyword id="KW-0539">Nucleus</keyword>
<keyword id="KW-0597">Phosphoprotein</keyword>
<keyword id="KW-1185">Reference proteome</keyword>
<keyword id="KW-0677">Repeat</keyword>
<keyword id="KW-0694">RNA-binding</keyword>
<keyword id="KW-0747">Spliceosome</keyword>
<keyword id="KW-0832">Ubl conjugation</keyword>